<organism>
    <name type="scientific">Shewanella sp. (strain ANA-3)</name>
    <dbReference type="NCBI Taxonomy" id="94122"/>
    <lineage>
        <taxon>Bacteria</taxon>
        <taxon>Pseudomonadati</taxon>
        <taxon>Pseudomonadota</taxon>
        <taxon>Gammaproteobacteria</taxon>
        <taxon>Alteromonadales</taxon>
        <taxon>Shewanellaceae</taxon>
        <taxon>Shewanella</taxon>
    </lineage>
</organism>
<evidence type="ECO:0000255" key="1">
    <source>
        <dbReference type="HAMAP-Rule" id="MF_00409"/>
    </source>
</evidence>
<feature type="chain" id="PRO_0000291245" description="Tetraacyldisaccharide 4'-kinase">
    <location>
        <begin position="1"/>
        <end position="335"/>
    </location>
</feature>
<feature type="binding site" evidence="1">
    <location>
        <begin position="58"/>
        <end position="65"/>
    </location>
    <ligand>
        <name>ATP</name>
        <dbReference type="ChEBI" id="CHEBI:30616"/>
    </ligand>
</feature>
<name>LPXK_SHESA</name>
<proteinExistence type="inferred from homology"/>
<dbReference type="EC" id="2.7.1.130" evidence="1"/>
<dbReference type="EMBL" id="CP000469">
    <property type="protein sequence ID" value="ABK48810.1"/>
    <property type="molecule type" value="Genomic_DNA"/>
</dbReference>
<dbReference type="RefSeq" id="WP_011717483.1">
    <property type="nucleotide sequence ID" value="NC_008577.1"/>
</dbReference>
<dbReference type="SMR" id="A0KYE1"/>
<dbReference type="STRING" id="94122.Shewana3_2583"/>
<dbReference type="KEGG" id="shn:Shewana3_2583"/>
<dbReference type="eggNOG" id="COG1663">
    <property type="taxonomic scope" value="Bacteria"/>
</dbReference>
<dbReference type="HOGENOM" id="CLU_038816_2_0_6"/>
<dbReference type="OrthoDB" id="9766423at2"/>
<dbReference type="UniPathway" id="UPA00359">
    <property type="reaction ID" value="UER00482"/>
</dbReference>
<dbReference type="Proteomes" id="UP000002589">
    <property type="component" value="Chromosome"/>
</dbReference>
<dbReference type="GO" id="GO:0005886">
    <property type="term" value="C:plasma membrane"/>
    <property type="evidence" value="ECO:0007669"/>
    <property type="project" value="TreeGrafter"/>
</dbReference>
<dbReference type="GO" id="GO:0005524">
    <property type="term" value="F:ATP binding"/>
    <property type="evidence" value="ECO:0007669"/>
    <property type="project" value="UniProtKB-UniRule"/>
</dbReference>
<dbReference type="GO" id="GO:0009029">
    <property type="term" value="F:tetraacyldisaccharide 4'-kinase activity"/>
    <property type="evidence" value="ECO:0007669"/>
    <property type="project" value="UniProtKB-UniRule"/>
</dbReference>
<dbReference type="GO" id="GO:0009245">
    <property type="term" value="P:lipid A biosynthetic process"/>
    <property type="evidence" value="ECO:0007669"/>
    <property type="project" value="UniProtKB-UniRule"/>
</dbReference>
<dbReference type="GO" id="GO:0009244">
    <property type="term" value="P:lipopolysaccharide core region biosynthetic process"/>
    <property type="evidence" value="ECO:0007669"/>
    <property type="project" value="TreeGrafter"/>
</dbReference>
<dbReference type="HAMAP" id="MF_00409">
    <property type="entry name" value="LpxK"/>
    <property type="match status" value="1"/>
</dbReference>
<dbReference type="InterPro" id="IPR003758">
    <property type="entry name" value="LpxK"/>
</dbReference>
<dbReference type="InterPro" id="IPR027417">
    <property type="entry name" value="P-loop_NTPase"/>
</dbReference>
<dbReference type="NCBIfam" id="TIGR00682">
    <property type="entry name" value="lpxK"/>
    <property type="match status" value="1"/>
</dbReference>
<dbReference type="PANTHER" id="PTHR42724">
    <property type="entry name" value="TETRAACYLDISACCHARIDE 4'-KINASE"/>
    <property type="match status" value="1"/>
</dbReference>
<dbReference type="PANTHER" id="PTHR42724:SF1">
    <property type="entry name" value="TETRAACYLDISACCHARIDE 4'-KINASE, MITOCHONDRIAL-RELATED"/>
    <property type="match status" value="1"/>
</dbReference>
<dbReference type="Pfam" id="PF02606">
    <property type="entry name" value="LpxK"/>
    <property type="match status" value="1"/>
</dbReference>
<dbReference type="SUPFAM" id="SSF52540">
    <property type="entry name" value="P-loop containing nucleoside triphosphate hydrolases"/>
    <property type="match status" value="1"/>
</dbReference>
<accession>A0KYE1</accession>
<reference key="1">
    <citation type="submission" date="2006-09" db="EMBL/GenBank/DDBJ databases">
        <title>Complete sequence of chromosome 1 of Shewanella sp. ANA-3.</title>
        <authorList>
            <person name="Copeland A."/>
            <person name="Lucas S."/>
            <person name="Lapidus A."/>
            <person name="Barry K."/>
            <person name="Detter J.C."/>
            <person name="Glavina del Rio T."/>
            <person name="Hammon N."/>
            <person name="Israni S."/>
            <person name="Dalin E."/>
            <person name="Tice H."/>
            <person name="Pitluck S."/>
            <person name="Chertkov O."/>
            <person name="Brettin T."/>
            <person name="Bruce D."/>
            <person name="Han C."/>
            <person name="Tapia R."/>
            <person name="Gilna P."/>
            <person name="Schmutz J."/>
            <person name="Larimer F."/>
            <person name="Land M."/>
            <person name="Hauser L."/>
            <person name="Kyrpides N."/>
            <person name="Kim E."/>
            <person name="Newman D."/>
            <person name="Salticov C."/>
            <person name="Konstantinidis K."/>
            <person name="Klappenback J."/>
            <person name="Tiedje J."/>
            <person name="Richardson P."/>
        </authorList>
    </citation>
    <scope>NUCLEOTIDE SEQUENCE [LARGE SCALE GENOMIC DNA]</scope>
    <source>
        <strain>ANA-3</strain>
    </source>
</reference>
<keyword id="KW-0067">ATP-binding</keyword>
<keyword id="KW-0418">Kinase</keyword>
<keyword id="KW-0441">Lipid A biosynthesis</keyword>
<keyword id="KW-0444">Lipid biosynthesis</keyword>
<keyword id="KW-0443">Lipid metabolism</keyword>
<keyword id="KW-0547">Nucleotide-binding</keyword>
<keyword id="KW-0808">Transferase</keyword>
<sequence>MQALVNKIWYEGHPLRWLLLPFSVLFALITAIRRSLFRLGLKSQTALPVPVIVVGNITVGGSGKTPTVIYLIELLRQHGFNPGVISRGYGADIQGVKVVTAVDSAAAVGDEPAMIVARTSVPMVVGAKRVDTAKALLAEFAVDVIICDDGLQHYALGRDIELVVIDGKRGLGNRHLLPAGPLREGAWRLNQVDFVVVNGGPAQANQFEMQLSPSAVLPVNPKAEAVFNPTQPVVAMAGIGHPARFFETLTQQGIQLALSHGFDDHQAYDKHVLCELAASRPLMMTEKDAVKCRDFAQENWWYLAVDAKLSPQFDQQLLSRVRSVAAAKQGKSHGV</sequence>
<protein>
    <recommendedName>
        <fullName evidence="1">Tetraacyldisaccharide 4'-kinase</fullName>
        <ecNumber evidence="1">2.7.1.130</ecNumber>
    </recommendedName>
    <alternativeName>
        <fullName evidence="1">Lipid A 4'-kinase</fullName>
    </alternativeName>
</protein>
<comment type="function">
    <text evidence="1">Transfers the gamma-phosphate of ATP to the 4'-position of a tetraacyldisaccharide 1-phosphate intermediate (termed DS-1-P) to form tetraacyldisaccharide 1,4'-bis-phosphate (lipid IVA).</text>
</comment>
<comment type="catalytic activity">
    <reaction evidence="1">
        <text>a lipid A disaccharide + ATP = a lipid IVA + ADP + H(+)</text>
        <dbReference type="Rhea" id="RHEA:67840"/>
        <dbReference type="ChEBI" id="CHEBI:15378"/>
        <dbReference type="ChEBI" id="CHEBI:30616"/>
        <dbReference type="ChEBI" id="CHEBI:176343"/>
        <dbReference type="ChEBI" id="CHEBI:176425"/>
        <dbReference type="ChEBI" id="CHEBI:456216"/>
        <dbReference type="EC" id="2.7.1.130"/>
    </reaction>
</comment>
<comment type="pathway">
    <text evidence="1">Glycolipid biosynthesis; lipid IV(A) biosynthesis; lipid IV(A) from (3R)-3-hydroxytetradecanoyl-[acyl-carrier-protein] and UDP-N-acetyl-alpha-D-glucosamine: step 6/6.</text>
</comment>
<comment type="similarity">
    <text evidence="1">Belongs to the LpxK family.</text>
</comment>
<gene>
    <name evidence="1" type="primary">lpxK</name>
    <name type="ordered locus">Shewana3_2583</name>
</gene>